<dbReference type="EMBL" id="EF380353">
    <property type="protein sequence ID" value="ABR01423.1"/>
    <property type="molecule type" value="Genomic_DNA"/>
</dbReference>
<dbReference type="RefSeq" id="YP_001294345.1">
    <property type="nucleotide sequence ID" value="NC_009601.1"/>
</dbReference>
<dbReference type="SMR" id="A6MMK0"/>
<dbReference type="GeneID" id="5236631"/>
<dbReference type="GO" id="GO:0009535">
    <property type="term" value="C:chloroplast thylakoid membrane"/>
    <property type="evidence" value="ECO:0007669"/>
    <property type="project" value="UniProtKB-SubCell"/>
</dbReference>
<dbReference type="GO" id="GO:0009512">
    <property type="term" value="C:cytochrome b6f complex"/>
    <property type="evidence" value="ECO:0007669"/>
    <property type="project" value="InterPro"/>
</dbReference>
<dbReference type="GO" id="GO:0045158">
    <property type="term" value="F:electron transporter, transferring electrons within cytochrome b6/f complex of photosystem II activity"/>
    <property type="evidence" value="ECO:0007669"/>
    <property type="project" value="InterPro"/>
</dbReference>
<dbReference type="GO" id="GO:0017004">
    <property type="term" value="P:cytochrome complex assembly"/>
    <property type="evidence" value="ECO:0007669"/>
    <property type="project" value="UniProtKB-UniRule"/>
</dbReference>
<dbReference type="GO" id="GO:0015979">
    <property type="term" value="P:photosynthesis"/>
    <property type="evidence" value="ECO:0007669"/>
    <property type="project" value="UniProtKB-KW"/>
</dbReference>
<dbReference type="HAMAP" id="MF_00395">
    <property type="entry name" value="Cytb6_f_PetN"/>
    <property type="match status" value="1"/>
</dbReference>
<dbReference type="InterPro" id="IPR036143">
    <property type="entry name" value="Cytochr_b6-f_cplx_su8_sf"/>
</dbReference>
<dbReference type="InterPro" id="IPR005497">
    <property type="entry name" value="Cytochrome_b6-f_cplx_su8"/>
</dbReference>
<dbReference type="Pfam" id="PF03742">
    <property type="entry name" value="PetN"/>
    <property type="match status" value="1"/>
</dbReference>
<dbReference type="SUPFAM" id="SSF103451">
    <property type="entry name" value="PetN subunit of the cytochrome b6f complex"/>
    <property type="match status" value="1"/>
</dbReference>
<keyword id="KW-0150">Chloroplast</keyword>
<keyword id="KW-0249">Electron transport</keyword>
<keyword id="KW-0472">Membrane</keyword>
<keyword id="KW-0602">Photosynthesis</keyword>
<keyword id="KW-0934">Plastid</keyword>
<keyword id="KW-0793">Thylakoid</keyword>
<keyword id="KW-0812">Transmembrane</keyword>
<keyword id="KW-1133">Transmembrane helix</keyword>
<keyword id="KW-0813">Transport</keyword>
<comment type="function">
    <text evidence="1">Component of the cytochrome b6-f complex, which mediates electron transfer between photosystem II (PSII) and photosystem I (PSI), cyclic electron flow around PSI, and state transitions.</text>
</comment>
<comment type="subunit">
    <text evidence="1">The 4 large subunits of the cytochrome b6-f complex are cytochrome b6, subunit IV (17 kDa polypeptide, PetD), cytochrome f and the Rieske protein, while the 4 small subunits are PetG, PetL, PetM and PetN. The complex functions as a dimer.</text>
</comment>
<comment type="subcellular location">
    <subcellularLocation>
        <location evidence="1">Plastid</location>
        <location evidence="1">Chloroplast thylakoid membrane</location>
        <topology evidence="1">Single-pass membrane protein</topology>
    </subcellularLocation>
</comment>
<comment type="similarity">
    <text evidence="1">Belongs to the PetN family.</text>
</comment>
<feature type="chain" id="PRO_0000355437" description="Cytochrome b6-f complex subunit 8">
    <location>
        <begin position="1"/>
        <end position="29"/>
    </location>
</feature>
<feature type="transmembrane region" description="Helical" evidence="1">
    <location>
        <begin position="3"/>
        <end position="23"/>
    </location>
</feature>
<gene>
    <name evidence="1" type="primary">petN</name>
</gene>
<protein>
    <recommendedName>
        <fullName evidence="1">Cytochrome b6-f complex subunit 8</fullName>
    </recommendedName>
    <alternativeName>
        <fullName evidence="1">Cytochrome b6-f complex subunit PetN</fullName>
    </alternativeName>
    <alternativeName>
        <fullName evidence="1">Cytochrome b6-f complex subunit VIII</fullName>
    </alternativeName>
</protein>
<evidence type="ECO:0000255" key="1">
    <source>
        <dbReference type="HAMAP-Rule" id="MF_00395"/>
    </source>
</evidence>
<accession>A6MMK0</accession>
<reference key="1">
    <citation type="journal article" date="2007" name="Mol. Phylogenet. Evol.">
        <title>Phylogenetic and evolutionary implications of complete chloroplast genome sequences of four early-diverging angiosperms: Buxus (Buxaceae), Chloranthus (Chloranthaceae), Dioscorea (Dioscoreaceae), and Illicium (Schisandraceae).</title>
        <authorList>
            <person name="Hansen D.R."/>
            <person name="Dastidar S.G."/>
            <person name="Cai Z."/>
            <person name="Penaflor C."/>
            <person name="Kuehl J.V."/>
            <person name="Boore J.L."/>
            <person name="Jansen R.K."/>
        </authorList>
    </citation>
    <scope>NUCLEOTIDE SEQUENCE [LARGE SCALE GENOMIC DNA]</scope>
</reference>
<name>PETN_DIOEL</name>
<proteinExistence type="inferred from homology"/>
<sequence>MDIVSLAWAALMVVFSFSLSLVVWGRSGL</sequence>
<geneLocation type="chloroplast"/>
<organism>
    <name type="scientific">Dioscorea elephantipes</name>
    <name type="common">Elephant's foot yam</name>
    <name type="synonym">Testudinaria elephantipes</name>
    <dbReference type="NCBI Taxonomy" id="145284"/>
    <lineage>
        <taxon>Eukaryota</taxon>
        <taxon>Viridiplantae</taxon>
        <taxon>Streptophyta</taxon>
        <taxon>Embryophyta</taxon>
        <taxon>Tracheophyta</taxon>
        <taxon>Spermatophyta</taxon>
        <taxon>Magnoliopsida</taxon>
        <taxon>Liliopsida</taxon>
        <taxon>Dioscoreales</taxon>
        <taxon>Dioscoreaceae</taxon>
        <taxon>Dioscorea</taxon>
    </lineage>
</organism>